<proteinExistence type="inferred from homology"/>
<accession>Q3K3S9</accession>
<comment type="function">
    <text evidence="1">Formation of pseudouridine at positions 38, 39 and 40 in the anticodon stem and loop of transfer RNAs.</text>
</comment>
<comment type="catalytic activity">
    <reaction evidence="1">
        <text>uridine(38/39/40) in tRNA = pseudouridine(38/39/40) in tRNA</text>
        <dbReference type="Rhea" id="RHEA:22376"/>
        <dbReference type="Rhea" id="RHEA-COMP:10085"/>
        <dbReference type="Rhea" id="RHEA-COMP:10087"/>
        <dbReference type="ChEBI" id="CHEBI:65314"/>
        <dbReference type="ChEBI" id="CHEBI:65315"/>
        <dbReference type="EC" id="5.4.99.12"/>
    </reaction>
</comment>
<comment type="subunit">
    <text evidence="1">Homodimer.</text>
</comment>
<comment type="similarity">
    <text evidence="1">Belongs to the tRNA pseudouridine synthase TruA family.</text>
</comment>
<sequence length="258" mass="29344">MTRYKAQISYDGSAFSGFQRQPNCRTVQEEIERTLKRLNSGNDVIIHGAGRTDAGVHAYGQVIHFDLPQARDVEKLRFGLDTQCPDDIDIVKVEQVSDDFHCRYDKHIKTYEFLVDIGRPKNPMMRNYATHYPYPVIIELMKEAIKDLVGTHDFTGFTASGTSVENKVRTIFDAKIQFEASKNLLIFTFTGNGFLYKQVRNMVGTLLKIGNGRMPISQIKTILQAKNRDLAGPTAAGNGLYLKEIIYEDEECFSNFRK</sequence>
<name>TRUA_STRA1</name>
<evidence type="ECO:0000255" key="1">
    <source>
        <dbReference type="HAMAP-Rule" id="MF_00171"/>
    </source>
</evidence>
<protein>
    <recommendedName>
        <fullName evidence="1">tRNA pseudouridine synthase A</fullName>
        <ecNumber evidence="1">5.4.99.12</ecNumber>
    </recommendedName>
    <alternativeName>
        <fullName evidence="1">tRNA pseudouridine(38-40) synthase</fullName>
    </alternativeName>
    <alternativeName>
        <fullName evidence="1">tRNA pseudouridylate synthase I</fullName>
    </alternativeName>
    <alternativeName>
        <fullName evidence="1">tRNA-uridine isomerase I</fullName>
    </alternativeName>
</protein>
<organism>
    <name type="scientific">Streptococcus agalactiae serotype Ia (strain ATCC 27591 / A909 / CDC SS700)</name>
    <dbReference type="NCBI Taxonomy" id="205921"/>
    <lineage>
        <taxon>Bacteria</taxon>
        <taxon>Bacillati</taxon>
        <taxon>Bacillota</taxon>
        <taxon>Bacilli</taxon>
        <taxon>Lactobacillales</taxon>
        <taxon>Streptococcaceae</taxon>
        <taxon>Streptococcus</taxon>
    </lineage>
</organism>
<feature type="chain" id="PRO_1000017190" description="tRNA pseudouridine synthase A">
    <location>
        <begin position="1"/>
        <end position="258"/>
    </location>
</feature>
<feature type="active site" description="Nucleophile" evidence="1">
    <location>
        <position position="53"/>
    </location>
</feature>
<feature type="binding site" evidence="1">
    <location>
        <position position="111"/>
    </location>
    <ligand>
        <name>substrate</name>
    </ligand>
</feature>
<reference key="1">
    <citation type="journal article" date="2005" name="Proc. Natl. Acad. Sci. U.S.A.">
        <title>Genome analysis of multiple pathogenic isolates of Streptococcus agalactiae: implications for the microbial 'pan-genome'.</title>
        <authorList>
            <person name="Tettelin H."/>
            <person name="Masignani V."/>
            <person name="Cieslewicz M.J."/>
            <person name="Donati C."/>
            <person name="Medini D."/>
            <person name="Ward N.L."/>
            <person name="Angiuoli S.V."/>
            <person name="Crabtree J."/>
            <person name="Jones A.L."/>
            <person name="Durkin A.S."/>
            <person name="DeBoy R.T."/>
            <person name="Davidsen T.M."/>
            <person name="Mora M."/>
            <person name="Scarselli M."/>
            <person name="Margarit y Ros I."/>
            <person name="Peterson J.D."/>
            <person name="Hauser C.R."/>
            <person name="Sundaram J.P."/>
            <person name="Nelson W.C."/>
            <person name="Madupu R."/>
            <person name="Brinkac L.M."/>
            <person name="Dodson R.J."/>
            <person name="Rosovitz M.J."/>
            <person name="Sullivan S.A."/>
            <person name="Daugherty S.C."/>
            <person name="Haft D.H."/>
            <person name="Selengut J."/>
            <person name="Gwinn M.L."/>
            <person name="Zhou L."/>
            <person name="Zafar N."/>
            <person name="Khouri H."/>
            <person name="Radune D."/>
            <person name="Dimitrov G."/>
            <person name="Watkins K."/>
            <person name="O'Connor K.J."/>
            <person name="Smith S."/>
            <person name="Utterback T.R."/>
            <person name="White O."/>
            <person name="Rubens C.E."/>
            <person name="Grandi G."/>
            <person name="Madoff L.C."/>
            <person name="Kasper D.L."/>
            <person name="Telford J.L."/>
            <person name="Wessels M.R."/>
            <person name="Rappuoli R."/>
            <person name="Fraser C.M."/>
        </authorList>
    </citation>
    <scope>NUCLEOTIDE SEQUENCE [LARGE SCALE GENOMIC DNA]</scope>
    <source>
        <strain>ATCC 27591 / A909 / CDC SS700</strain>
    </source>
</reference>
<dbReference type="EC" id="5.4.99.12" evidence="1"/>
<dbReference type="EMBL" id="CP000114">
    <property type="protein sequence ID" value="ABA45178.1"/>
    <property type="molecule type" value="Genomic_DNA"/>
</dbReference>
<dbReference type="RefSeq" id="WP_000199162.1">
    <property type="nucleotide sequence ID" value="NC_007432.1"/>
</dbReference>
<dbReference type="SMR" id="Q3K3S9"/>
<dbReference type="KEGG" id="sak:SAK_0150"/>
<dbReference type="HOGENOM" id="CLU_014673_0_1_9"/>
<dbReference type="GO" id="GO:0003723">
    <property type="term" value="F:RNA binding"/>
    <property type="evidence" value="ECO:0007669"/>
    <property type="project" value="InterPro"/>
</dbReference>
<dbReference type="GO" id="GO:0160147">
    <property type="term" value="F:tRNA pseudouridine(38-40) synthase activity"/>
    <property type="evidence" value="ECO:0007669"/>
    <property type="project" value="UniProtKB-EC"/>
</dbReference>
<dbReference type="GO" id="GO:0031119">
    <property type="term" value="P:tRNA pseudouridine synthesis"/>
    <property type="evidence" value="ECO:0007669"/>
    <property type="project" value="UniProtKB-UniRule"/>
</dbReference>
<dbReference type="CDD" id="cd02570">
    <property type="entry name" value="PseudoU_synth_EcTruA"/>
    <property type="match status" value="1"/>
</dbReference>
<dbReference type="FunFam" id="3.30.70.580:FF:000001">
    <property type="entry name" value="tRNA pseudouridine synthase A"/>
    <property type="match status" value="1"/>
</dbReference>
<dbReference type="Gene3D" id="3.30.70.660">
    <property type="entry name" value="Pseudouridine synthase I, catalytic domain, C-terminal subdomain"/>
    <property type="match status" value="1"/>
</dbReference>
<dbReference type="Gene3D" id="3.30.70.580">
    <property type="entry name" value="Pseudouridine synthase I, catalytic domain, N-terminal subdomain"/>
    <property type="match status" value="1"/>
</dbReference>
<dbReference type="HAMAP" id="MF_00171">
    <property type="entry name" value="TruA"/>
    <property type="match status" value="1"/>
</dbReference>
<dbReference type="InterPro" id="IPR020103">
    <property type="entry name" value="PsdUridine_synth_cat_dom_sf"/>
</dbReference>
<dbReference type="InterPro" id="IPR001406">
    <property type="entry name" value="PsdUridine_synth_TruA"/>
</dbReference>
<dbReference type="InterPro" id="IPR020097">
    <property type="entry name" value="PsdUridine_synth_TruA_a/b_dom"/>
</dbReference>
<dbReference type="InterPro" id="IPR020095">
    <property type="entry name" value="PsdUridine_synth_TruA_C"/>
</dbReference>
<dbReference type="InterPro" id="IPR020094">
    <property type="entry name" value="TruA/RsuA/RluB/E/F_N"/>
</dbReference>
<dbReference type="NCBIfam" id="TIGR00071">
    <property type="entry name" value="hisT_truA"/>
    <property type="match status" value="1"/>
</dbReference>
<dbReference type="PANTHER" id="PTHR11142">
    <property type="entry name" value="PSEUDOURIDYLATE SYNTHASE"/>
    <property type="match status" value="1"/>
</dbReference>
<dbReference type="PANTHER" id="PTHR11142:SF0">
    <property type="entry name" value="TRNA PSEUDOURIDINE SYNTHASE-LIKE 1"/>
    <property type="match status" value="1"/>
</dbReference>
<dbReference type="Pfam" id="PF01416">
    <property type="entry name" value="PseudoU_synth_1"/>
    <property type="match status" value="2"/>
</dbReference>
<dbReference type="PIRSF" id="PIRSF001430">
    <property type="entry name" value="tRNA_psdUrid_synth"/>
    <property type="match status" value="1"/>
</dbReference>
<dbReference type="SUPFAM" id="SSF55120">
    <property type="entry name" value="Pseudouridine synthase"/>
    <property type="match status" value="1"/>
</dbReference>
<keyword id="KW-0413">Isomerase</keyword>
<keyword id="KW-0819">tRNA processing</keyword>
<gene>
    <name evidence="1" type="primary">truA</name>
    <name type="ordered locus">SAK_0150</name>
</gene>